<accession>P72931</accession>
<gene>
    <name evidence="1" type="primary">obg</name>
    <name type="ordered locus">slr1090</name>
</gene>
<comment type="function">
    <text evidence="1">An essential GTPase which binds GTP, GDP and possibly (p)ppGpp with moderate affinity, with high nucleotide exchange rates and a fairly low GTP hydrolysis rate. Plays a role in control of the cell cycle, stress response, ribosome biogenesis and in those bacteria that undergo differentiation, in morphogenesis control.</text>
</comment>
<comment type="cofactor">
    <cofactor evidence="1">
        <name>Mg(2+)</name>
        <dbReference type="ChEBI" id="CHEBI:18420"/>
    </cofactor>
</comment>
<comment type="subunit">
    <text evidence="1">Monomer.</text>
</comment>
<comment type="subcellular location">
    <subcellularLocation>
        <location evidence="1">Cytoplasm</location>
    </subcellularLocation>
</comment>
<comment type="similarity">
    <text evidence="1">Belongs to the TRAFAC class OBG-HflX-like GTPase superfamily. OBG GTPase family.</text>
</comment>
<reference key="1">
    <citation type="journal article" date="1996" name="DNA Res.">
        <title>Sequence analysis of the genome of the unicellular cyanobacterium Synechocystis sp. strain PCC6803. II. Sequence determination of the entire genome and assignment of potential protein-coding regions.</title>
        <authorList>
            <person name="Kaneko T."/>
            <person name="Sato S."/>
            <person name="Kotani H."/>
            <person name="Tanaka A."/>
            <person name="Asamizu E."/>
            <person name="Nakamura Y."/>
            <person name="Miyajima N."/>
            <person name="Hirosawa M."/>
            <person name="Sugiura M."/>
            <person name="Sasamoto S."/>
            <person name="Kimura T."/>
            <person name="Hosouchi T."/>
            <person name="Matsuno A."/>
            <person name="Muraki A."/>
            <person name="Nakazaki N."/>
            <person name="Naruo K."/>
            <person name="Okumura S."/>
            <person name="Shimpo S."/>
            <person name="Takeuchi C."/>
            <person name="Wada T."/>
            <person name="Watanabe A."/>
            <person name="Yamada M."/>
            <person name="Yasuda M."/>
            <person name="Tabata S."/>
        </authorList>
    </citation>
    <scope>NUCLEOTIDE SEQUENCE [LARGE SCALE GENOMIC DNA]</scope>
    <source>
        <strain>ATCC 27184 / PCC 6803 / Kazusa</strain>
    </source>
</reference>
<proteinExistence type="inferred from homology"/>
<name>OBG_SYNY3</name>
<sequence>MQFIDQAEIEVQGGKGGDGMVSFRREKYVPAGGPSGGNGGRGGSVIFEADANLQTLLDFRYARIFKAEDGKKGGSSNCTGANGKDVVVQVPCGTMVYDLDGECLLGDLVSPGQRLCVAAGGKGGLGNQHFLSNRNRAPEYALPGLEGEQRQLRLELKLLAEVGIIGLPNAGKSTLIAALSAARPKIADYPFTTLVPNLGVVRKPTGDGTVFADIPGLIEGAAAGIGLGHEFLRHIERTRLLLHVLDVTAGDPIANFRVIQQELDAYGRGITEKPQIIALNKIDALDGEMIGEIETELKRFSTAPCLHISAATRRGLDDLMQLVWQWLDEMAAADAEAQRLLELELQAQAAMNNPFNSDVPIDGVTYSS</sequence>
<dbReference type="EC" id="3.6.5.-" evidence="1"/>
<dbReference type="EMBL" id="BA000022">
    <property type="protein sequence ID" value="BAA16948.1"/>
    <property type="molecule type" value="Genomic_DNA"/>
</dbReference>
<dbReference type="PIR" id="S74797">
    <property type="entry name" value="S74797"/>
</dbReference>
<dbReference type="SMR" id="P72931"/>
<dbReference type="FunCoup" id="P72931">
    <property type="interactions" value="417"/>
</dbReference>
<dbReference type="IntAct" id="P72931">
    <property type="interactions" value="3"/>
</dbReference>
<dbReference type="STRING" id="1148.gene:10497808"/>
<dbReference type="PaxDb" id="1148-1652022"/>
<dbReference type="EnsemblBacteria" id="BAA16948">
    <property type="protein sequence ID" value="BAA16948"/>
    <property type="gene ID" value="BAA16948"/>
</dbReference>
<dbReference type="KEGG" id="syn:slr1090"/>
<dbReference type="eggNOG" id="COG0536">
    <property type="taxonomic scope" value="Bacteria"/>
</dbReference>
<dbReference type="InParanoid" id="P72931"/>
<dbReference type="PhylomeDB" id="P72931"/>
<dbReference type="Proteomes" id="UP000001425">
    <property type="component" value="Chromosome"/>
</dbReference>
<dbReference type="GO" id="GO:0005737">
    <property type="term" value="C:cytoplasm"/>
    <property type="evidence" value="ECO:0007669"/>
    <property type="project" value="UniProtKB-SubCell"/>
</dbReference>
<dbReference type="GO" id="GO:0005525">
    <property type="term" value="F:GTP binding"/>
    <property type="evidence" value="ECO:0000318"/>
    <property type="project" value="GO_Central"/>
</dbReference>
<dbReference type="GO" id="GO:0003924">
    <property type="term" value="F:GTPase activity"/>
    <property type="evidence" value="ECO:0000318"/>
    <property type="project" value="GO_Central"/>
</dbReference>
<dbReference type="GO" id="GO:0000287">
    <property type="term" value="F:magnesium ion binding"/>
    <property type="evidence" value="ECO:0007669"/>
    <property type="project" value="InterPro"/>
</dbReference>
<dbReference type="GO" id="GO:0042254">
    <property type="term" value="P:ribosome biogenesis"/>
    <property type="evidence" value="ECO:0007669"/>
    <property type="project" value="UniProtKB-UniRule"/>
</dbReference>
<dbReference type="CDD" id="cd01898">
    <property type="entry name" value="Obg"/>
    <property type="match status" value="1"/>
</dbReference>
<dbReference type="FunFam" id="2.70.210.12:FF:000001">
    <property type="entry name" value="GTPase Obg"/>
    <property type="match status" value="1"/>
</dbReference>
<dbReference type="Gene3D" id="2.70.210.12">
    <property type="entry name" value="GTP1/OBG domain"/>
    <property type="match status" value="1"/>
</dbReference>
<dbReference type="Gene3D" id="3.40.50.300">
    <property type="entry name" value="P-loop containing nucleotide triphosphate hydrolases"/>
    <property type="match status" value="1"/>
</dbReference>
<dbReference type="HAMAP" id="MF_01454">
    <property type="entry name" value="GTPase_Obg"/>
    <property type="match status" value="1"/>
</dbReference>
<dbReference type="InterPro" id="IPR031167">
    <property type="entry name" value="G_OBG"/>
</dbReference>
<dbReference type="InterPro" id="IPR006073">
    <property type="entry name" value="GTP-bd"/>
</dbReference>
<dbReference type="InterPro" id="IPR014100">
    <property type="entry name" value="GTP-bd_Obg/CgtA"/>
</dbReference>
<dbReference type="InterPro" id="IPR006074">
    <property type="entry name" value="GTP1-OBG_CS"/>
</dbReference>
<dbReference type="InterPro" id="IPR006169">
    <property type="entry name" value="GTP1_OBG_dom"/>
</dbReference>
<dbReference type="InterPro" id="IPR036726">
    <property type="entry name" value="GTP1_OBG_dom_sf"/>
</dbReference>
<dbReference type="InterPro" id="IPR045086">
    <property type="entry name" value="OBG_GTPase"/>
</dbReference>
<dbReference type="InterPro" id="IPR027417">
    <property type="entry name" value="P-loop_NTPase"/>
</dbReference>
<dbReference type="NCBIfam" id="TIGR02729">
    <property type="entry name" value="Obg_CgtA"/>
    <property type="match status" value="1"/>
</dbReference>
<dbReference type="NCBIfam" id="NF008954">
    <property type="entry name" value="PRK12296.1"/>
    <property type="match status" value="1"/>
</dbReference>
<dbReference type="NCBIfam" id="NF008955">
    <property type="entry name" value="PRK12297.1"/>
    <property type="match status" value="1"/>
</dbReference>
<dbReference type="NCBIfam" id="NF008956">
    <property type="entry name" value="PRK12299.1"/>
    <property type="match status" value="1"/>
</dbReference>
<dbReference type="PANTHER" id="PTHR11702">
    <property type="entry name" value="DEVELOPMENTALLY REGULATED GTP-BINDING PROTEIN-RELATED"/>
    <property type="match status" value="1"/>
</dbReference>
<dbReference type="PANTHER" id="PTHR11702:SF31">
    <property type="entry name" value="MITOCHONDRIAL RIBOSOME-ASSOCIATED GTPASE 2"/>
    <property type="match status" value="1"/>
</dbReference>
<dbReference type="Pfam" id="PF01018">
    <property type="entry name" value="GTP1_OBG"/>
    <property type="match status" value="1"/>
</dbReference>
<dbReference type="Pfam" id="PF01926">
    <property type="entry name" value="MMR_HSR1"/>
    <property type="match status" value="1"/>
</dbReference>
<dbReference type="PIRSF" id="PIRSF002401">
    <property type="entry name" value="GTP_bd_Obg/CgtA"/>
    <property type="match status" value="1"/>
</dbReference>
<dbReference type="PRINTS" id="PR00326">
    <property type="entry name" value="GTP1OBG"/>
</dbReference>
<dbReference type="SUPFAM" id="SSF82051">
    <property type="entry name" value="Obg GTP-binding protein N-terminal domain"/>
    <property type="match status" value="1"/>
</dbReference>
<dbReference type="SUPFAM" id="SSF52540">
    <property type="entry name" value="P-loop containing nucleoside triphosphate hydrolases"/>
    <property type="match status" value="1"/>
</dbReference>
<dbReference type="PROSITE" id="PS51710">
    <property type="entry name" value="G_OBG"/>
    <property type="match status" value="1"/>
</dbReference>
<dbReference type="PROSITE" id="PS00905">
    <property type="entry name" value="GTP1_OBG"/>
    <property type="match status" value="1"/>
</dbReference>
<dbReference type="PROSITE" id="PS51883">
    <property type="entry name" value="OBG"/>
    <property type="match status" value="1"/>
</dbReference>
<organism>
    <name type="scientific">Synechocystis sp. (strain ATCC 27184 / PCC 6803 / Kazusa)</name>
    <dbReference type="NCBI Taxonomy" id="1111708"/>
    <lineage>
        <taxon>Bacteria</taxon>
        <taxon>Bacillati</taxon>
        <taxon>Cyanobacteriota</taxon>
        <taxon>Cyanophyceae</taxon>
        <taxon>Synechococcales</taxon>
        <taxon>Merismopediaceae</taxon>
        <taxon>Synechocystis</taxon>
    </lineage>
</organism>
<feature type="chain" id="PRO_0000386342" description="GTPase Obg">
    <location>
        <begin position="1"/>
        <end position="368"/>
    </location>
</feature>
<feature type="domain" description="Obg" evidence="2">
    <location>
        <begin position="1"/>
        <end position="159"/>
    </location>
</feature>
<feature type="domain" description="OBG-type G" evidence="1">
    <location>
        <begin position="160"/>
        <end position="328"/>
    </location>
</feature>
<feature type="binding site" evidence="1">
    <location>
        <begin position="166"/>
        <end position="173"/>
    </location>
    <ligand>
        <name>GTP</name>
        <dbReference type="ChEBI" id="CHEBI:37565"/>
    </ligand>
</feature>
<feature type="binding site" evidence="1">
    <location>
        <position position="173"/>
    </location>
    <ligand>
        <name>Mg(2+)</name>
        <dbReference type="ChEBI" id="CHEBI:18420"/>
    </ligand>
</feature>
<feature type="binding site" evidence="1">
    <location>
        <begin position="191"/>
        <end position="195"/>
    </location>
    <ligand>
        <name>GTP</name>
        <dbReference type="ChEBI" id="CHEBI:37565"/>
    </ligand>
</feature>
<feature type="binding site" evidence="1">
    <location>
        <position position="193"/>
    </location>
    <ligand>
        <name>Mg(2+)</name>
        <dbReference type="ChEBI" id="CHEBI:18420"/>
    </ligand>
</feature>
<feature type="binding site" evidence="1">
    <location>
        <begin position="213"/>
        <end position="216"/>
    </location>
    <ligand>
        <name>GTP</name>
        <dbReference type="ChEBI" id="CHEBI:37565"/>
    </ligand>
</feature>
<feature type="binding site" evidence="1">
    <location>
        <begin position="280"/>
        <end position="283"/>
    </location>
    <ligand>
        <name>GTP</name>
        <dbReference type="ChEBI" id="CHEBI:37565"/>
    </ligand>
</feature>
<feature type="binding site" evidence="1">
    <location>
        <begin position="309"/>
        <end position="311"/>
    </location>
    <ligand>
        <name>GTP</name>
        <dbReference type="ChEBI" id="CHEBI:37565"/>
    </ligand>
</feature>
<protein>
    <recommendedName>
        <fullName evidence="1">GTPase Obg</fullName>
        <ecNumber evidence="1">3.6.5.-</ecNumber>
    </recommendedName>
    <alternativeName>
        <fullName evidence="1">GTP-binding protein Obg</fullName>
    </alternativeName>
</protein>
<keyword id="KW-0963">Cytoplasm</keyword>
<keyword id="KW-0342">GTP-binding</keyword>
<keyword id="KW-0378">Hydrolase</keyword>
<keyword id="KW-0460">Magnesium</keyword>
<keyword id="KW-0479">Metal-binding</keyword>
<keyword id="KW-0547">Nucleotide-binding</keyword>
<keyword id="KW-1185">Reference proteome</keyword>
<evidence type="ECO:0000255" key="1">
    <source>
        <dbReference type="HAMAP-Rule" id="MF_01454"/>
    </source>
</evidence>
<evidence type="ECO:0000255" key="2">
    <source>
        <dbReference type="PROSITE-ProRule" id="PRU01231"/>
    </source>
</evidence>